<evidence type="ECO:0000255" key="1">
    <source>
        <dbReference type="HAMAP-Rule" id="MF_01857"/>
    </source>
</evidence>
<evidence type="ECO:0000305" key="2"/>
<reference key="1">
    <citation type="submission" date="2006-03" db="EMBL/GenBank/DDBJ databases">
        <title>Complete sequence of Shewanella denitrificans OS217.</title>
        <authorList>
            <consortium name="US DOE Joint Genome Institute"/>
            <person name="Copeland A."/>
            <person name="Lucas S."/>
            <person name="Lapidus A."/>
            <person name="Barry K."/>
            <person name="Detter J.C."/>
            <person name="Glavina del Rio T."/>
            <person name="Hammon N."/>
            <person name="Israni S."/>
            <person name="Dalin E."/>
            <person name="Tice H."/>
            <person name="Pitluck S."/>
            <person name="Brettin T."/>
            <person name="Bruce D."/>
            <person name="Han C."/>
            <person name="Tapia R."/>
            <person name="Gilna P."/>
            <person name="Kiss H."/>
            <person name="Schmutz J."/>
            <person name="Larimer F."/>
            <person name="Land M."/>
            <person name="Hauser L."/>
            <person name="Kyrpides N."/>
            <person name="Lykidis A."/>
            <person name="Richardson P."/>
        </authorList>
    </citation>
    <scope>NUCLEOTIDE SEQUENCE [LARGE SCALE GENOMIC DNA]</scope>
    <source>
        <strain>OS217 / ATCC BAA-1090 / DSM 15013</strain>
    </source>
</reference>
<gene>
    <name evidence="1" type="primary">rlmI</name>
    <name type="ordered locus">Sden_3155</name>
</gene>
<proteinExistence type="inferred from homology"/>
<protein>
    <recommendedName>
        <fullName evidence="1">Ribosomal RNA large subunit methyltransferase I</fullName>
        <ecNumber evidence="1">2.1.1.191</ecNumber>
    </recommendedName>
    <alternativeName>
        <fullName evidence="1">23S rRNA m5C1962 methyltransferase</fullName>
    </alternativeName>
    <alternativeName>
        <fullName evidence="1">rRNA (cytosine-C(5)-)-methyltransferase RlmI</fullName>
    </alternativeName>
</protein>
<dbReference type="EC" id="2.1.1.191" evidence="1"/>
<dbReference type="EMBL" id="CP000302">
    <property type="protein sequence ID" value="ABE56431.1"/>
    <property type="status" value="ALT_INIT"/>
    <property type="molecule type" value="Genomic_DNA"/>
</dbReference>
<dbReference type="RefSeq" id="WP_041405863.1">
    <property type="nucleotide sequence ID" value="NC_007954.1"/>
</dbReference>
<dbReference type="SMR" id="Q12JE5"/>
<dbReference type="STRING" id="318161.Sden_3155"/>
<dbReference type="KEGG" id="sdn:Sden_3155"/>
<dbReference type="eggNOG" id="COG1092">
    <property type="taxonomic scope" value="Bacteria"/>
</dbReference>
<dbReference type="HOGENOM" id="CLU_014042_0_0_6"/>
<dbReference type="OrthoDB" id="9805492at2"/>
<dbReference type="Proteomes" id="UP000001982">
    <property type="component" value="Chromosome"/>
</dbReference>
<dbReference type="GO" id="GO:0005737">
    <property type="term" value="C:cytoplasm"/>
    <property type="evidence" value="ECO:0007669"/>
    <property type="project" value="UniProtKB-SubCell"/>
</dbReference>
<dbReference type="GO" id="GO:0003723">
    <property type="term" value="F:RNA binding"/>
    <property type="evidence" value="ECO:0007669"/>
    <property type="project" value="UniProtKB-KW"/>
</dbReference>
<dbReference type="GO" id="GO:0016434">
    <property type="term" value="F:rRNA (cytosine) methyltransferase activity"/>
    <property type="evidence" value="ECO:0007669"/>
    <property type="project" value="UniProtKB-UniRule"/>
</dbReference>
<dbReference type="CDD" id="cd02440">
    <property type="entry name" value="AdoMet_MTases"/>
    <property type="match status" value="1"/>
</dbReference>
<dbReference type="CDD" id="cd21153">
    <property type="entry name" value="PUA_RlmI"/>
    <property type="match status" value="1"/>
</dbReference>
<dbReference type="CDD" id="cd11572">
    <property type="entry name" value="RlmI_M_like"/>
    <property type="match status" value="1"/>
</dbReference>
<dbReference type="Gene3D" id="2.30.130.10">
    <property type="entry name" value="PUA domain"/>
    <property type="match status" value="1"/>
</dbReference>
<dbReference type="Gene3D" id="3.30.750.80">
    <property type="entry name" value="RNA methyltransferase domain (HRMD) like"/>
    <property type="match status" value="1"/>
</dbReference>
<dbReference type="Gene3D" id="3.40.50.150">
    <property type="entry name" value="Vaccinia Virus protein VP39"/>
    <property type="match status" value="1"/>
</dbReference>
<dbReference type="HAMAP" id="MF_01857">
    <property type="entry name" value="23SrRNA_methyltr_I"/>
    <property type="match status" value="1"/>
</dbReference>
<dbReference type="InterPro" id="IPR002478">
    <property type="entry name" value="PUA"/>
</dbReference>
<dbReference type="InterPro" id="IPR015947">
    <property type="entry name" value="PUA-like_sf"/>
</dbReference>
<dbReference type="InterPro" id="IPR036974">
    <property type="entry name" value="PUA_sf"/>
</dbReference>
<dbReference type="InterPro" id="IPR023542">
    <property type="entry name" value="RLMI"/>
</dbReference>
<dbReference type="InterPro" id="IPR041532">
    <property type="entry name" value="RlmI-like_PUA"/>
</dbReference>
<dbReference type="InterPro" id="IPR019614">
    <property type="entry name" value="SAM-dep_methyl-trfase"/>
</dbReference>
<dbReference type="InterPro" id="IPR029063">
    <property type="entry name" value="SAM-dependent_MTases_sf"/>
</dbReference>
<dbReference type="PANTHER" id="PTHR42873">
    <property type="entry name" value="RIBOSOMAL RNA LARGE SUBUNIT METHYLTRANSFERASE"/>
    <property type="match status" value="1"/>
</dbReference>
<dbReference type="PANTHER" id="PTHR42873:SF1">
    <property type="entry name" value="S-ADENOSYLMETHIONINE-DEPENDENT METHYLTRANSFERASE DOMAIN-CONTAINING PROTEIN"/>
    <property type="match status" value="1"/>
</dbReference>
<dbReference type="Pfam" id="PF10672">
    <property type="entry name" value="Methyltrans_SAM"/>
    <property type="match status" value="1"/>
</dbReference>
<dbReference type="Pfam" id="PF17785">
    <property type="entry name" value="PUA_3"/>
    <property type="match status" value="1"/>
</dbReference>
<dbReference type="SMART" id="SM00359">
    <property type="entry name" value="PUA"/>
    <property type="match status" value="1"/>
</dbReference>
<dbReference type="SUPFAM" id="SSF88697">
    <property type="entry name" value="PUA domain-like"/>
    <property type="match status" value="1"/>
</dbReference>
<dbReference type="SUPFAM" id="SSF53335">
    <property type="entry name" value="S-adenosyl-L-methionine-dependent methyltransferases"/>
    <property type="match status" value="1"/>
</dbReference>
<dbReference type="PROSITE" id="PS50890">
    <property type="entry name" value="PUA"/>
    <property type="match status" value="1"/>
</dbReference>
<name>RLMI_SHEDO</name>
<organism>
    <name type="scientific">Shewanella denitrificans (strain OS217 / ATCC BAA-1090 / DSM 15013)</name>
    <dbReference type="NCBI Taxonomy" id="318161"/>
    <lineage>
        <taxon>Bacteria</taxon>
        <taxon>Pseudomonadati</taxon>
        <taxon>Pseudomonadota</taxon>
        <taxon>Gammaproteobacteria</taxon>
        <taxon>Alteromonadales</taxon>
        <taxon>Shewanellaceae</taxon>
        <taxon>Shewanella</taxon>
    </lineage>
</organism>
<accession>Q12JE5</accession>
<comment type="function">
    <text evidence="1">Specifically methylates the cytosine at position 1962 (m5C1962) of 23S rRNA.</text>
</comment>
<comment type="catalytic activity">
    <reaction evidence="1">
        <text>cytidine(1962) in 23S rRNA + S-adenosyl-L-methionine = 5-methylcytidine(1962) in 23S rRNA + S-adenosyl-L-homocysteine + H(+)</text>
        <dbReference type="Rhea" id="RHEA:42912"/>
        <dbReference type="Rhea" id="RHEA-COMP:10382"/>
        <dbReference type="Rhea" id="RHEA-COMP:10386"/>
        <dbReference type="ChEBI" id="CHEBI:15378"/>
        <dbReference type="ChEBI" id="CHEBI:57856"/>
        <dbReference type="ChEBI" id="CHEBI:59789"/>
        <dbReference type="ChEBI" id="CHEBI:74483"/>
        <dbReference type="ChEBI" id="CHEBI:82748"/>
        <dbReference type="EC" id="2.1.1.191"/>
    </reaction>
</comment>
<comment type="subcellular location">
    <subcellularLocation>
        <location evidence="1">Cytoplasm</location>
    </subcellularLocation>
</comment>
<comment type="similarity">
    <text evidence="1">Belongs to the methyltransferase superfamily. RlmI family.</text>
</comment>
<comment type="sequence caution" evidence="2">
    <conflict type="erroneous initiation">
        <sequence resource="EMBL-CDS" id="ABE56431"/>
    </conflict>
</comment>
<keyword id="KW-0963">Cytoplasm</keyword>
<keyword id="KW-0489">Methyltransferase</keyword>
<keyword id="KW-1185">Reference proteome</keyword>
<keyword id="KW-0694">RNA-binding</keyword>
<keyword id="KW-0698">rRNA processing</keyword>
<keyword id="KW-0949">S-adenosyl-L-methionine</keyword>
<keyword id="KW-0808">Transferase</keyword>
<sequence>MAIRIKLKPGRERSLERRHPWVFSNGIHNVNGGKPQAGDTVDVVAHDGRWLGRGAWSPESQIQVRIWTFDKEEAIDADFFARRIQRAQAGREDLIREQGLTGYRLIAAESDGLPGITIDRYADVLVCQLLNTGAEKWRDTLVEQLALQFPGCAIYERSDVDSRKKEGLAPVQGLLHGELPAMPIIIEENGIKIAVDVVKGHKTGFYLDQRDNRAIAARFVKGKSVLNCFCYTGTFGLYAAKAGAASIENVDVSALALQTARDNMAINGLDDSHVNYHEADVFKLLRQYRDEGKTFDVIVLDPPKFADNKSQLNGACRGYKDINMIAMQLLNPGGILLTFSCSGLMESDLFQKVVADAALDAKREVQFVERMHQASDHPISSAFPEGYYLKGLVARVW</sequence>
<feature type="chain" id="PRO_0000366258" description="Ribosomal RNA large subunit methyltransferase I">
    <location>
        <begin position="1"/>
        <end position="397"/>
    </location>
</feature>
<feature type="domain" description="PUA" evidence="1">
    <location>
        <begin position="2"/>
        <end position="80"/>
    </location>
</feature>